<feature type="chain" id="PRO_0000357963" description="NAD(P)H-quinone oxidoreductase subunit H, chloroplastic">
    <location>
        <begin position="1"/>
        <end position="393"/>
    </location>
</feature>
<reference key="1">
    <citation type="journal article" date="2003" name="Mol. Biol. Evol.">
        <title>Analysis of the Amborella trichopoda chloroplast genome sequence suggests that Amborella is not a basal angiosperm.</title>
        <authorList>
            <person name="Goremykin V.V."/>
            <person name="Hirsch-Ernst K.I."/>
            <person name="Wolfl S."/>
            <person name="Hellwig F.H."/>
        </authorList>
    </citation>
    <scope>NUCLEOTIDE SEQUENCE [LARGE SCALE GENOMIC DNA]</scope>
</reference>
<protein>
    <recommendedName>
        <fullName evidence="1">NAD(P)H-quinone oxidoreductase subunit H, chloroplastic</fullName>
        <ecNumber evidence="1">7.1.1.-</ecNumber>
    </recommendedName>
    <alternativeName>
        <fullName>NAD(P)H dehydrogenase subunit H</fullName>
    </alternativeName>
    <alternativeName>
        <fullName evidence="1">NADH-plastoquinone oxidoreductase 49 kDa subunit</fullName>
    </alternativeName>
    <alternativeName>
        <fullName evidence="1">NADH-plastoquinone oxidoreductase subunit H</fullName>
    </alternativeName>
</protein>
<accession>Q70XV8</accession>
<geneLocation type="chloroplast"/>
<keyword id="KW-0150">Chloroplast</keyword>
<keyword id="KW-0472">Membrane</keyword>
<keyword id="KW-0520">NAD</keyword>
<keyword id="KW-0521">NADP</keyword>
<keyword id="KW-0934">Plastid</keyword>
<keyword id="KW-0618">Plastoquinone</keyword>
<keyword id="KW-0874">Quinone</keyword>
<keyword id="KW-1185">Reference proteome</keyword>
<keyword id="KW-0793">Thylakoid</keyword>
<keyword id="KW-1278">Translocase</keyword>
<keyword id="KW-0813">Transport</keyword>
<organism>
    <name type="scientific">Amborella trichopoda</name>
    <dbReference type="NCBI Taxonomy" id="13333"/>
    <lineage>
        <taxon>Eukaryota</taxon>
        <taxon>Viridiplantae</taxon>
        <taxon>Streptophyta</taxon>
        <taxon>Embryophyta</taxon>
        <taxon>Tracheophyta</taxon>
        <taxon>Spermatophyta</taxon>
        <taxon>Magnoliopsida</taxon>
        <taxon>Amborellales</taxon>
        <taxon>Amborellaceae</taxon>
        <taxon>Amborella</taxon>
    </lineage>
</organism>
<comment type="function">
    <text evidence="1">NDH shuttles electrons from NAD(P)H:plastoquinone, via FMN and iron-sulfur (Fe-S) centers, to quinones in the photosynthetic chain and possibly in a chloroplast respiratory chain. The immediate electron acceptor for the enzyme in this species is believed to be plastoquinone. Couples the redox reaction to proton translocation, and thus conserves the redox energy in a proton gradient.</text>
</comment>
<comment type="catalytic activity">
    <reaction evidence="1">
        <text>a plastoquinone + NADH + (n+1) H(+)(in) = a plastoquinol + NAD(+) + n H(+)(out)</text>
        <dbReference type="Rhea" id="RHEA:42608"/>
        <dbReference type="Rhea" id="RHEA-COMP:9561"/>
        <dbReference type="Rhea" id="RHEA-COMP:9562"/>
        <dbReference type="ChEBI" id="CHEBI:15378"/>
        <dbReference type="ChEBI" id="CHEBI:17757"/>
        <dbReference type="ChEBI" id="CHEBI:57540"/>
        <dbReference type="ChEBI" id="CHEBI:57945"/>
        <dbReference type="ChEBI" id="CHEBI:62192"/>
    </reaction>
</comment>
<comment type="catalytic activity">
    <reaction evidence="1">
        <text>a plastoquinone + NADPH + (n+1) H(+)(in) = a plastoquinol + NADP(+) + n H(+)(out)</text>
        <dbReference type="Rhea" id="RHEA:42612"/>
        <dbReference type="Rhea" id="RHEA-COMP:9561"/>
        <dbReference type="Rhea" id="RHEA-COMP:9562"/>
        <dbReference type="ChEBI" id="CHEBI:15378"/>
        <dbReference type="ChEBI" id="CHEBI:17757"/>
        <dbReference type="ChEBI" id="CHEBI:57783"/>
        <dbReference type="ChEBI" id="CHEBI:58349"/>
        <dbReference type="ChEBI" id="CHEBI:62192"/>
    </reaction>
</comment>
<comment type="subunit">
    <text evidence="1">NDH is composed of at least 16 different subunits, 5 of which are encoded in the nucleus.</text>
</comment>
<comment type="subcellular location">
    <subcellularLocation>
        <location evidence="1">Plastid</location>
        <location evidence="1">Chloroplast thylakoid membrane</location>
        <topology evidence="1">Peripheral membrane protein</topology>
        <orientation evidence="1">Stromal side</orientation>
    </subcellularLocation>
</comment>
<comment type="similarity">
    <text evidence="1">Belongs to the complex I 49 kDa subunit family.</text>
</comment>
<proteinExistence type="inferred from homology"/>
<sequence length="393" mass="45638">MTVPATRNDLMIVNMGPHHPSMHGVLRLIVTLDGEDVIDCEPILGYLHRGMEKIAENRTIIQYLPYVTRWDYLATMFTEAITVNAPEELGNIQVPRRASYIRVIMLELSRIASHLLWLGPFMADIGAQTPFFYIFRERELLYDLFETATGMRMMHNFFRIGGVAADLPHGWIDKCLDFCDYFLPEVAEYQKLITRNPIFLERVEGVGFIAEEEAINWGLSGPMLRASGIPWDLRKVDHYECYDEFDWEVQWQKEGDSLARYLVRISEMIESVKIIQQALEGIPGGPYENLEARRFDRVRNIEWNDFEYRFISKKPSPTFELSKQELYVRVEAPKGELGIFLIGDNSVFPWRWKIRPPGLINLQILPQLVKRMKLADIMTILGSIDIIMGEVDR</sequence>
<gene>
    <name evidence="1" type="primary">ndhH</name>
</gene>
<dbReference type="EC" id="7.1.1.-" evidence="1"/>
<dbReference type="EMBL" id="AJ506156">
    <property type="protein sequence ID" value="CAD45162.1"/>
    <property type="molecule type" value="Genomic_DNA"/>
</dbReference>
<dbReference type="RefSeq" id="NP_904155.1">
    <property type="nucleotide sequence ID" value="NC_005086.1"/>
</dbReference>
<dbReference type="SMR" id="Q70XV8"/>
<dbReference type="STRING" id="13333.Q70XV8"/>
<dbReference type="GeneID" id="2546617"/>
<dbReference type="KEGG" id="atr:2546617"/>
<dbReference type="eggNOG" id="KOG2870">
    <property type="taxonomic scope" value="Eukaryota"/>
</dbReference>
<dbReference type="eggNOG" id="KOG4770">
    <property type="taxonomic scope" value="Eukaryota"/>
</dbReference>
<dbReference type="OrthoDB" id="1845069at2759"/>
<dbReference type="Proteomes" id="UP000017836">
    <property type="component" value="Chloroplast"/>
</dbReference>
<dbReference type="GO" id="GO:0009535">
    <property type="term" value="C:chloroplast thylakoid membrane"/>
    <property type="evidence" value="ECO:0007669"/>
    <property type="project" value="UniProtKB-SubCell"/>
</dbReference>
<dbReference type="GO" id="GO:0051287">
    <property type="term" value="F:NAD binding"/>
    <property type="evidence" value="ECO:0007669"/>
    <property type="project" value="InterPro"/>
</dbReference>
<dbReference type="GO" id="GO:0016655">
    <property type="term" value="F:oxidoreductase activity, acting on NAD(P)H, quinone or similar compound as acceptor"/>
    <property type="evidence" value="ECO:0007669"/>
    <property type="project" value="UniProtKB-UniRule"/>
</dbReference>
<dbReference type="GO" id="GO:0048038">
    <property type="term" value="F:quinone binding"/>
    <property type="evidence" value="ECO:0007669"/>
    <property type="project" value="UniProtKB-KW"/>
</dbReference>
<dbReference type="GO" id="GO:0019684">
    <property type="term" value="P:photosynthesis, light reaction"/>
    <property type="evidence" value="ECO:0007669"/>
    <property type="project" value="UniProtKB-UniRule"/>
</dbReference>
<dbReference type="FunFam" id="1.10.645.10:FF:000003">
    <property type="entry name" value="NAD(P)H-quinone oxidoreductase subunit H, chloroplastic"/>
    <property type="match status" value="1"/>
</dbReference>
<dbReference type="Gene3D" id="1.10.645.10">
    <property type="entry name" value="Cytochrome-c3 Hydrogenase, chain B"/>
    <property type="match status" value="1"/>
</dbReference>
<dbReference type="HAMAP" id="MF_01358">
    <property type="entry name" value="NDH1_NuoD"/>
    <property type="match status" value="1"/>
</dbReference>
<dbReference type="InterPro" id="IPR001135">
    <property type="entry name" value="NADH_Q_OxRdtase_suD"/>
</dbReference>
<dbReference type="InterPro" id="IPR014029">
    <property type="entry name" value="NADH_UbQ_OxRdtase_49kDa_CS"/>
</dbReference>
<dbReference type="InterPro" id="IPR022885">
    <property type="entry name" value="NDH1_su_D/H"/>
</dbReference>
<dbReference type="InterPro" id="IPR029014">
    <property type="entry name" value="NiFe-Hase_large"/>
</dbReference>
<dbReference type="NCBIfam" id="NF004739">
    <property type="entry name" value="PRK06075.1"/>
    <property type="match status" value="1"/>
</dbReference>
<dbReference type="NCBIfam" id="NF005649">
    <property type="entry name" value="PRK07415.1"/>
    <property type="match status" value="1"/>
</dbReference>
<dbReference type="PANTHER" id="PTHR11993:SF10">
    <property type="entry name" value="NADH DEHYDROGENASE [UBIQUINONE] IRON-SULFUR PROTEIN 2, MITOCHONDRIAL"/>
    <property type="match status" value="1"/>
</dbReference>
<dbReference type="PANTHER" id="PTHR11993">
    <property type="entry name" value="NADH-UBIQUINONE OXIDOREDUCTASE 49 KDA SUBUNIT"/>
    <property type="match status" value="1"/>
</dbReference>
<dbReference type="Pfam" id="PF00346">
    <property type="entry name" value="Complex1_49kDa"/>
    <property type="match status" value="1"/>
</dbReference>
<dbReference type="SUPFAM" id="SSF56762">
    <property type="entry name" value="HydB/Nqo4-like"/>
    <property type="match status" value="1"/>
</dbReference>
<dbReference type="PROSITE" id="PS00535">
    <property type="entry name" value="COMPLEX1_49K"/>
    <property type="match status" value="1"/>
</dbReference>
<evidence type="ECO:0000255" key="1">
    <source>
        <dbReference type="HAMAP-Rule" id="MF_01358"/>
    </source>
</evidence>
<name>NDHH_AMBTC</name>